<reference key="1">
    <citation type="journal article" date="1997" name="Nature">
        <title>The complete genome sequence of the Gram-positive bacterium Bacillus subtilis.</title>
        <authorList>
            <person name="Kunst F."/>
            <person name="Ogasawara N."/>
            <person name="Moszer I."/>
            <person name="Albertini A.M."/>
            <person name="Alloni G."/>
            <person name="Azevedo V."/>
            <person name="Bertero M.G."/>
            <person name="Bessieres P."/>
            <person name="Bolotin A."/>
            <person name="Borchert S."/>
            <person name="Borriss R."/>
            <person name="Boursier L."/>
            <person name="Brans A."/>
            <person name="Braun M."/>
            <person name="Brignell S.C."/>
            <person name="Bron S."/>
            <person name="Brouillet S."/>
            <person name="Bruschi C.V."/>
            <person name="Caldwell B."/>
            <person name="Capuano V."/>
            <person name="Carter N.M."/>
            <person name="Choi S.-K."/>
            <person name="Codani J.-J."/>
            <person name="Connerton I.F."/>
            <person name="Cummings N.J."/>
            <person name="Daniel R.A."/>
            <person name="Denizot F."/>
            <person name="Devine K.M."/>
            <person name="Duesterhoeft A."/>
            <person name="Ehrlich S.D."/>
            <person name="Emmerson P.T."/>
            <person name="Entian K.-D."/>
            <person name="Errington J."/>
            <person name="Fabret C."/>
            <person name="Ferrari E."/>
            <person name="Foulger D."/>
            <person name="Fritz C."/>
            <person name="Fujita M."/>
            <person name="Fujita Y."/>
            <person name="Fuma S."/>
            <person name="Galizzi A."/>
            <person name="Galleron N."/>
            <person name="Ghim S.-Y."/>
            <person name="Glaser P."/>
            <person name="Goffeau A."/>
            <person name="Golightly E.J."/>
            <person name="Grandi G."/>
            <person name="Guiseppi G."/>
            <person name="Guy B.J."/>
            <person name="Haga K."/>
            <person name="Haiech J."/>
            <person name="Harwood C.R."/>
            <person name="Henaut A."/>
            <person name="Hilbert H."/>
            <person name="Holsappel S."/>
            <person name="Hosono S."/>
            <person name="Hullo M.-F."/>
            <person name="Itaya M."/>
            <person name="Jones L.-M."/>
            <person name="Joris B."/>
            <person name="Karamata D."/>
            <person name="Kasahara Y."/>
            <person name="Klaerr-Blanchard M."/>
            <person name="Klein C."/>
            <person name="Kobayashi Y."/>
            <person name="Koetter P."/>
            <person name="Koningstein G."/>
            <person name="Krogh S."/>
            <person name="Kumano M."/>
            <person name="Kurita K."/>
            <person name="Lapidus A."/>
            <person name="Lardinois S."/>
            <person name="Lauber J."/>
            <person name="Lazarevic V."/>
            <person name="Lee S.-M."/>
            <person name="Levine A."/>
            <person name="Liu H."/>
            <person name="Masuda S."/>
            <person name="Mauel C."/>
            <person name="Medigue C."/>
            <person name="Medina N."/>
            <person name="Mellado R.P."/>
            <person name="Mizuno M."/>
            <person name="Moestl D."/>
            <person name="Nakai S."/>
            <person name="Noback M."/>
            <person name="Noone D."/>
            <person name="O'Reilly M."/>
            <person name="Ogawa K."/>
            <person name="Ogiwara A."/>
            <person name="Oudega B."/>
            <person name="Park S.-H."/>
            <person name="Parro V."/>
            <person name="Pohl T.M."/>
            <person name="Portetelle D."/>
            <person name="Porwollik S."/>
            <person name="Prescott A.M."/>
            <person name="Presecan E."/>
            <person name="Pujic P."/>
            <person name="Purnelle B."/>
            <person name="Rapoport G."/>
            <person name="Rey M."/>
            <person name="Reynolds S."/>
            <person name="Rieger M."/>
            <person name="Rivolta C."/>
            <person name="Rocha E."/>
            <person name="Roche B."/>
            <person name="Rose M."/>
            <person name="Sadaie Y."/>
            <person name="Sato T."/>
            <person name="Scanlan E."/>
            <person name="Schleich S."/>
            <person name="Schroeter R."/>
            <person name="Scoffone F."/>
            <person name="Sekiguchi J."/>
            <person name="Sekowska A."/>
            <person name="Seror S.J."/>
            <person name="Serror P."/>
            <person name="Shin B.-S."/>
            <person name="Soldo B."/>
            <person name="Sorokin A."/>
            <person name="Tacconi E."/>
            <person name="Takagi T."/>
            <person name="Takahashi H."/>
            <person name="Takemaru K."/>
            <person name="Takeuchi M."/>
            <person name="Tamakoshi A."/>
            <person name="Tanaka T."/>
            <person name="Terpstra P."/>
            <person name="Tognoni A."/>
            <person name="Tosato V."/>
            <person name="Uchiyama S."/>
            <person name="Vandenbol M."/>
            <person name="Vannier F."/>
            <person name="Vassarotti A."/>
            <person name="Viari A."/>
            <person name="Wambutt R."/>
            <person name="Wedler E."/>
            <person name="Wedler H."/>
            <person name="Weitzenegger T."/>
            <person name="Winters P."/>
            <person name="Wipat A."/>
            <person name="Yamamoto H."/>
            <person name="Yamane K."/>
            <person name="Yasumoto K."/>
            <person name="Yata K."/>
            <person name="Yoshida K."/>
            <person name="Yoshikawa H.-F."/>
            <person name="Zumstein E."/>
            <person name="Yoshikawa H."/>
            <person name="Danchin A."/>
        </authorList>
    </citation>
    <scope>NUCLEOTIDE SEQUENCE [LARGE SCALE GENOMIC DNA]</scope>
    <source>
        <strain>168</strain>
    </source>
</reference>
<accession>O31813</accession>
<proteinExistence type="predicted"/>
<gene>
    <name type="primary">yndJ</name>
    <name type="ordered locus">BSU17800</name>
</gene>
<comment type="subcellular location">
    <subcellularLocation>
        <location evidence="2">Cell membrane</location>
        <topology evidence="2">Multi-pass membrane protein</topology>
    </subcellularLocation>
</comment>
<keyword id="KW-1003">Cell membrane</keyword>
<keyword id="KW-0472">Membrane</keyword>
<keyword id="KW-1185">Reference proteome</keyword>
<keyword id="KW-0812">Transmembrane</keyword>
<keyword id="KW-1133">Transmembrane helix</keyword>
<evidence type="ECO:0000255" key="1"/>
<evidence type="ECO:0000305" key="2"/>
<sequence length="546" mass="62471">MKRNGIVSALCFIGFLAAEAPDISVAEALVLLSILFFVPGIFPFVFRQSPVRAAQFMENGLIQCYPVAAFFAVLALVTEVGGFALIWWMYTVFNALYAILRLWETKIHRIEETSVLFGLIYLAGGGFWFFAYAAHLQIMQFGPLIILLTAVHFHYSAFLIPIFNGLLGRTIRKHRMLYSWITWVILLSPLLIALGITYSKTLDVIAVSIYMAAIYLHAFLVFTAAFRTKTGTFLIRLSSAVLMITIAFSMIYSFGVFRQEVTLTINQMIWIHGFVNAFGVILPALIGWRIEDAKPFDADSVKTFSRIYGKRKIGEEFLANIQAENNARYSGLVDDMGSLRSKDFSPEKLAPLILSFYEQTIEYNIKAKVTWSTWFRPLAIIYEWFSRRIGQIHLSTNPDWYRMYSKIKGVHSKKDGRERVRAWIRTNEKNETIFTALYSVYRSNGEGYMNISLPLPFSSMTGILKPYHHQEKLVLTSRRRKSRAGDEGIYLQTRAGTCPLPLSETFLIEAVHDNKLTAVHHMWLFGIKFLTVHYSITHINQPIERT</sequence>
<feature type="chain" id="PRO_0000370256" description="Uncharacterized membrane protein YndJ">
    <location>
        <begin position="1"/>
        <end position="546"/>
    </location>
</feature>
<feature type="transmembrane region" description="Helical" evidence="1">
    <location>
        <begin position="27"/>
        <end position="46"/>
    </location>
</feature>
<feature type="transmembrane region" description="Helical" evidence="1">
    <location>
        <begin position="59"/>
        <end position="78"/>
    </location>
</feature>
<feature type="transmembrane region" description="Helical" evidence="1">
    <location>
        <begin position="83"/>
        <end position="100"/>
    </location>
</feature>
<feature type="transmembrane region" description="Helical" evidence="1">
    <location>
        <begin position="114"/>
        <end position="134"/>
    </location>
</feature>
<feature type="transmembrane region" description="Helical" evidence="1">
    <location>
        <begin position="143"/>
        <end position="163"/>
    </location>
</feature>
<feature type="transmembrane region" description="Helical" evidence="1">
    <location>
        <begin position="176"/>
        <end position="196"/>
    </location>
</feature>
<feature type="transmembrane region" description="Helical" evidence="1">
    <location>
        <begin position="204"/>
        <end position="224"/>
    </location>
</feature>
<feature type="transmembrane region" description="Helical" evidence="1">
    <location>
        <begin position="237"/>
        <end position="257"/>
    </location>
</feature>
<feature type="transmembrane region" description="Helical" evidence="1">
    <location>
        <begin position="268"/>
        <end position="288"/>
    </location>
</feature>
<name>YNDJ_BACSU</name>
<organism>
    <name type="scientific">Bacillus subtilis (strain 168)</name>
    <dbReference type="NCBI Taxonomy" id="224308"/>
    <lineage>
        <taxon>Bacteria</taxon>
        <taxon>Bacillati</taxon>
        <taxon>Bacillota</taxon>
        <taxon>Bacilli</taxon>
        <taxon>Bacillales</taxon>
        <taxon>Bacillaceae</taxon>
        <taxon>Bacillus</taxon>
    </lineage>
</organism>
<dbReference type="EMBL" id="AL009126">
    <property type="protein sequence ID" value="CAB13664.1"/>
    <property type="molecule type" value="Genomic_DNA"/>
</dbReference>
<dbReference type="PIR" id="A69890">
    <property type="entry name" value="A69890"/>
</dbReference>
<dbReference type="RefSeq" id="NP_389663.1">
    <property type="nucleotide sequence ID" value="NC_000964.3"/>
</dbReference>
<dbReference type="RefSeq" id="WP_003231612.1">
    <property type="nucleotide sequence ID" value="NZ_OZ025638.1"/>
</dbReference>
<dbReference type="SMR" id="O31813"/>
<dbReference type="FunCoup" id="O31813">
    <property type="interactions" value="54"/>
</dbReference>
<dbReference type="STRING" id="224308.BSU17800"/>
<dbReference type="TCDB" id="9.B.227.1.5">
    <property type="family name" value="the uncharacterized 9 or 10 tms protein (yndj) family"/>
</dbReference>
<dbReference type="PaxDb" id="224308-BSU17800"/>
<dbReference type="EnsemblBacteria" id="CAB13664">
    <property type="protein sequence ID" value="CAB13664"/>
    <property type="gene ID" value="BSU_17800"/>
</dbReference>
<dbReference type="GeneID" id="939575"/>
<dbReference type="KEGG" id="bsu:BSU17800"/>
<dbReference type="PATRIC" id="fig|224308.179.peg.1940"/>
<dbReference type="eggNOG" id="ENOG502ZAB6">
    <property type="taxonomic scope" value="Bacteria"/>
</dbReference>
<dbReference type="InParanoid" id="O31813"/>
<dbReference type="OrthoDB" id="2614436at2"/>
<dbReference type="BioCyc" id="BSUB:BSU17800-MONOMER"/>
<dbReference type="Proteomes" id="UP000001570">
    <property type="component" value="Chromosome"/>
</dbReference>
<dbReference type="GO" id="GO:0005886">
    <property type="term" value="C:plasma membrane"/>
    <property type="evidence" value="ECO:0007669"/>
    <property type="project" value="UniProtKB-SubCell"/>
</dbReference>
<dbReference type="InterPro" id="IPR025450">
    <property type="entry name" value="YndJ-like"/>
</dbReference>
<dbReference type="Pfam" id="PF14158">
    <property type="entry name" value="YndJ"/>
    <property type="match status" value="1"/>
</dbReference>
<protein>
    <recommendedName>
        <fullName>Uncharacterized membrane protein YndJ</fullName>
    </recommendedName>
</protein>